<keyword id="KW-0413">Isomerase</keyword>
<keyword id="KW-0819">tRNA processing</keyword>
<proteinExistence type="inferred from homology"/>
<sequence length="324" mass="35812">MGRPRRRGRDINGVLLLDKPLGLSSNDVLQKVKRLFSANRAGHTGALDPLATGMLPICLGEATKFSQFLLDSDKRYRVVARLGQRTDTSDAEGALISEREVNLTQAQIDTALESFRGESQQIPSMYSALKHQGKPLYEYARQGIEVEREARSITVYELLFIRWEGNDLELEIHCSKGTYIRTIIDDLGELLGCGAHVSYLRRLQVATYPSERMVTLEQLTAMVEAAQAEGRSPNPELDSLLLPMDSAVLNFPEVNLLPSVAAYVKQGQPVHVSGAPSEGMVRITEGKERNFIGIGTIAEDGRVAPKRLVVESVEVENLPVENKK</sequence>
<comment type="function">
    <text evidence="1">Responsible for synthesis of pseudouridine from uracil-55 in the psi GC loop of transfer RNAs.</text>
</comment>
<comment type="catalytic activity">
    <reaction evidence="1">
        <text>uridine(55) in tRNA = pseudouridine(55) in tRNA</text>
        <dbReference type="Rhea" id="RHEA:42532"/>
        <dbReference type="Rhea" id="RHEA-COMP:10101"/>
        <dbReference type="Rhea" id="RHEA-COMP:10102"/>
        <dbReference type="ChEBI" id="CHEBI:65314"/>
        <dbReference type="ChEBI" id="CHEBI:65315"/>
        <dbReference type="EC" id="5.4.99.25"/>
    </reaction>
</comment>
<comment type="similarity">
    <text evidence="1">Belongs to the pseudouridine synthase TruB family. Type 1 subfamily.</text>
</comment>
<reference key="1">
    <citation type="journal article" date="2006" name="J. Bacteriol.">
        <title>Complete genome sequence of Yersinia pestis strains Antiqua and Nepal516: evidence of gene reduction in an emerging pathogen.</title>
        <authorList>
            <person name="Chain P.S.G."/>
            <person name="Hu P."/>
            <person name="Malfatti S.A."/>
            <person name="Radnedge L."/>
            <person name="Larimer F."/>
            <person name="Vergez L.M."/>
            <person name="Worsham P."/>
            <person name="Chu M.C."/>
            <person name="Andersen G.L."/>
        </authorList>
    </citation>
    <scope>NUCLEOTIDE SEQUENCE [LARGE SCALE GENOMIC DNA]</scope>
    <source>
        <strain>Antiqua</strain>
    </source>
</reference>
<protein>
    <recommendedName>
        <fullName evidence="1">tRNA pseudouridine synthase B</fullName>
        <ecNumber evidence="1">5.4.99.25</ecNumber>
    </recommendedName>
    <alternativeName>
        <fullName evidence="1">tRNA pseudouridine(55) synthase</fullName>
        <shortName evidence="1">Psi55 synthase</shortName>
    </alternativeName>
    <alternativeName>
        <fullName evidence="1">tRNA pseudouridylate synthase</fullName>
    </alternativeName>
    <alternativeName>
        <fullName evidence="1">tRNA-uridine isomerase</fullName>
    </alternativeName>
</protein>
<evidence type="ECO:0000255" key="1">
    <source>
        <dbReference type="HAMAP-Rule" id="MF_01080"/>
    </source>
</evidence>
<dbReference type="EC" id="5.4.99.25" evidence="1"/>
<dbReference type="EMBL" id="CP000308">
    <property type="protein sequence ID" value="ABG12013.1"/>
    <property type="molecule type" value="Genomic_DNA"/>
</dbReference>
<dbReference type="RefSeq" id="WP_002209256.1">
    <property type="nucleotide sequence ID" value="NZ_CP009906.1"/>
</dbReference>
<dbReference type="SMR" id="Q1CC09"/>
<dbReference type="GeneID" id="57975222"/>
<dbReference type="KEGG" id="ypa:YPA_0044"/>
<dbReference type="Proteomes" id="UP000001971">
    <property type="component" value="Chromosome"/>
</dbReference>
<dbReference type="GO" id="GO:0003723">
    <property type="term" value="F:RNA binding"/>
    <property type="evidence" value="ECO:0007669"/>
    <property type="project" value="InterPro"/>
</dbReference>
<dbReference type="GO" id="GO:0160148">
    <property type="term" value="F:tRNA pseudouridine(55) synthase activity"/>
    <property type="evidence" value="ECO:0007669"/>
    <property type="project" value="UniProtKB-EC"/>
</dbReference>
<dbReference type="GO" id="GO:1990481">
    <property type="term" value="P:mRNA pseudouridine synthesis"/>
    <property type="evidence" value="ECO:0007669"/>
    <property type="project" value="TreeGrafter"/>
</dbReference>
<dbReference type="GO" id="GO:0031119">
    <property type="term" value="P:tRNA pseudouridine synthesis"/>
    <property type="evidence" value="ECO:0007669"/>
    <property type="project" value="UniProtKB-UniRule"/>
</dbReference>
<dbReference type="CDD" id="cd02573">
    <property type="entry name" value="PseudoU_synth_EcTruB"/>
    <property type="match status" value="1"/>
</dbReference>
<dbReference type="CDD" id="cd21152">
    <property type="entry name" value="PUA_TruB_bacterial"/>
    <property type="match status" value="1"/>
</dbReference>
<dbReference type="FunFam" id="2.30.130.10:FF:000004">
    <property type="entry name" value="tRNA pseudouridine synthase B"/>
    <property type="match status" value="1"/>
</dbReference>
<dbReference type="FunFam" id="3.30.2350.10:FF:000003">
    <property type="entry name" value="tRNA pseudouridine synthase B"/>
    <property type="match status" value="1"/>
</dbReference>
<dbReference type="Gene3D" id="3.30.2350.10">
    <property type="entry name" value="Pseudouridine synthase"/>
    <property type="match status" value="1"/>
</dbReference>
<dbReference type="Gene3D" id="2.30.130.10">
    <property type="entry name" value="PUA domain"/>
    <property type="match status" value="1"/>
</dbReference>
<dbReference type="HAMAP" id="MF_01080">
    <property type="entry name" value="TruB_bact"/>
    <property type="match status" value="1"/>
</dbReference>
<dbReference type="InterPro" id="IPR020103">
    <property type="entry name" value="PsdUridine_synth_cat_dom_sf"/>
</dbReference>
<dbReference type="InterPro" id="IPR002501">
    <property type="entry name" value="PsdUridine_synth_N"/>
</dbReference>
<dbReference type="InterPro" id="IPR015947">
    <property type="entry name" value="PUA-like_sf"/>
</dbReference>
<dbReference type="InterPro" id="IPR036974">
    <property type="entry name" value="PUA_sf"/>
</dbReference>
<dbReference type="InterPro" id="IPR014780">
    <property type="entry name" value="tRNA_psdUridine_synth_TruB"/>
</dbReference>
<dbReference type="InterPro" id="IPR015240">
    <property type="entry name" value="tRNA_sdUridine_synth_fam1_C"/>
</dbReference>
<dbReference type="InterPro" id="IPR032819">
    <property type="entry name" value="TruB_C"/>
</dbReference>
<dbReference type="NCBIfam" id="TIGR00431">
    <property type="entry name" value="TruB"/>
    <property type="match status" value="1"/>
</dbReference>
<dbReference type="PANTHER" id="PTHR13767:SF2">
    <property type="entry name" value="PSEUDOURIDYLATE SYNTHASE TRUB1"/>
    <property type="match status" value="1"/>
</dbReference>
<dbReference type="PANTHER" id="PTHR13767">
    <property type="entry name" value="TRNA-PSEUDOURIDINE SYNTHASE"/>
    <property type="match status" value="1"/>
</dbReference>
<dbReference type="Pfam" id="PF09157">
    <property type="entry name" value="TruB-C_2"/>
    <property type="match status" value="1"/>
</dbReference>
<dbReference type="Pfam" id="PF16198">
    <property type="entry name" value="TruB_C_2"/>
    <property type="match status" value="1"/>
</dbReference>
<dbReference type="Pfam" id="PF01509">
    <property type="entry name" value="TruB_N"/>
    <property type="match status" value="1"/>
</dbReference>
<dbReference type="SUPFAM" id="SSF55120">
    <property type="entry name" value="Pseudouridine synthase"/>
    <property type="match status" value="1"/>
</dbReference>
<dbReference type="SUPFAM" id="SSF88697">
    <property type="entry name" value="PUA domain-like"/>
    <property type="match status" value="1"/>
</dbReference>
<accession>Q1CC09</accession>
<gene>
    <name evidence="1" type="primary">truB</name>
    <name type="ordered locus">YPA_0044</name>
</gene>
<feature type="chain" id="PRO_1000084717" description="tRNA pseudouridine synthase B">
    <location>
        <begin position="1"/>
        <end position="324"/>
    </location>
</feature>
<feature type="active site" description="Nucleophile" evidence="1">
    <location>
        <position position="48"/>
    </location>
</feature>
<feature type="binding site" evidence="1">
    <location>
        <position position="43"/>
    </location>
    <ligand>
        <name>substrate</name>
    </ligand>
</feature>
<feature type="binding site" evidence="1">
    <location>
        <position position="76"/>
    </location>
    <ligand>
        <name>substrate</name>
    </ligand>
</feature>
<feature type="binding site" evidence="1">
    <location>
        <position position="179"/>
    </location>
    <ligand>
        <name>substrate</name>
    </ligand>
</feature>
<feature type="binding site" evidence="1">
    <location>
        <position position="200"/>
    </location>
    <ligand>
        <name>substrate</name>
    </ligand>
</feature>
<organism>
    <name type="scientific">Yersinia pestis bv. Antiqua (strain Antiqua)</name>
    <dbReference type="NCBI Taxonomy" id="360102"/>
    <lineage>
        <taxon>Bacteria</taxon>
        <taxon>Pseudomonadati</taxon>
        <taxon>Pseudomonadota</taxon>
        <taxon>Gammaproteobacteria</taxon>
        <taxon>Enterobacterales</taxon>
        <taxon>Yersiniaceae</taxon>
        <taxon>Yersinia</taxon>
    </lineage>
</organism>
<name>TRUB_YERPA</name>